<organism>
    <name type="scientific">Nicotiana tabacum</name>
    <name type="common">Common tobacco</name>
    <dbReference type="NCBI Taxonomy" id="4097"/>
    <lineage>
        <taxon>Eukaryota</taxon>
        <taxon>Viridiplantae</taxon>
        <taxon>Streptophyta</taxon>
        <taxon>Embryophyta</taxon>
        <taxon>Tracheophyta</taxon>
        <taxon>Spermatophyta</taxon>
        <taxon>Magnoliopsida</taxon>
        <taxon>eudicotyledons</taxon>
        <taxon>Gunneridae</taxon>
        <taxon>Pentapetalae</taxon>
        <taxon>asterids</taxon>
        <taxon>lamiids</taxon>
        <taxon>Solanales</taxon>
        <taxon>Solanaceae</taxon>
        <taxon>Nicotianoideae</taxon>
        <taxon>Nicotianeae</taxon>
        <taxon>Nicotiana</taxon>
    </lineage>
</organism>
<comment type="function">
    <text evidence="1 5 6">May modulate chromatin structure by regulation of nucleosome assembly/disassembly. Could function together with B-type cyclins in the regulation of microtubule dynamics.</text>
</comment>
<comment type="subunit">
    <text evidence="6">Binds preferentially histone H1 in vitro. Interacts with CYCB1;1.</text>
</comment>
<comment type="subcellular location">
    <subcellularLocation>
        <location evidence="1">Nucleus</location>
    </subcellularLocation>
    <subcellularLocation>
        <location evidence="6">Cytoplasm</location>
    </subcellularLocation>
</comment>
<comment type="domain">
    <text>The acidic domain is probably involved in the interaction with histones.</text>
</comment>
<comment type="similarity">
    <text evidence="7">Belongs to the nucleosome assembly protein (NAP) family.</text>
</comment>
<protein>
    <recommendedName>
        <fullName>Nucleosome assembly protein 1;2</fullName>
        <shortName>NtNAP1;2</shortName>
    </recommendedName>
    <alternativeName>
        <fullName>Nucleosome assembly protein 1-like 2</fullName>
        <shortName>NtNAP1_L2</shortName>
    </alternativeName>
</protein>
<keyword id="KW-0143">Chaperone</keyword>
<keyword id="KW-0175">Coiled coil</keyword>
<keyword id="KW-0963">Cytoplasm</keyword>
<keyword id="KW-0449">Lipoprotein</keyword>
<keyword id="KW-0488">Methylation</keyword>
<keyword id="KW-0539">Nucleus</keyword>
<keyword id="KW-0636">Prenylation</keyword>
<keyword id="KW-1185">Reference proteome</keyword>
<name>NAP1B_TOBAC</name>
<gene>
    <name type="primary">NAP1;2</name>
    <name type="synonym">NAP1_L2</name>
</gene>
<sequence length="377" mass="43154">MSNTKDNFNVADLTAALNAGDRADLVNVLKNKLHDLTGKHSNVTESLSPNVRKRVEALREIQTEHDELEAKFFEERAALEAKYQKLYQPLYTKRFEIVNGVVEVDGATTEAAAADKQEDKDAVEKGVPDFWLTAMKNNEVLAEEITERDEEALKFLRDIKWSRIDDPKGFKLDFFFETNPYFKNSVLTKTYHMIDEDEPILEKAIATEIEWYPGKCLTQKILKKKPKKGSKNAKPITKTEQCESFFNFFSPPQVPEDEEDIDEDAAEELQNLMEQDYDIGSTIRDKIIPHAVSWFTGEAAEDDYAELEDDEDEDDDEEDDEDEDEEEEDEEDDEDEEEDEDETKTKKKTSAVPKKSGRVPAAADGQSGERPPECKQQ</sequence>
<dbReference type="EMBL" id="AJ438614">
    <property type="protein sequence ID" value="CAD27461.1"/>
    <property type="molecule type" value="mRNA"/>
</dbReference>
<dbReference type="RefSeq" id="NP_001311629.1">
    <property type="nucleotide sequence ID" value="NM_001324700.1"/>
</dbReference>
<dbReference type="SMR" id="Q70Z18"/>
<dbReference type="STRING" id="4097.Q70Z18"/>
<dbReference type="PaxDb" id="4097-Q70Z18"/>
<dbReference type="GeneID" id="107760768"/>
<dbReference type="KEGG" id="nta:107760768"/>
<dbReference type="OrthoDB" id="27325at2759"/>
<dbReference type="Proteomes" id="UP000084051">
    <property type="component" value="Unplaced"/>
</dbReference>
<dbReference type="GO" id="GO:0000785">
    <property type="term" value="C:chromatin"/>
    <property type="evidence" value="ECO:0000318"/>
    <property type="project" value="GO_Central"/>
</dbReference>
<dbReference type="GO" id="GO:0005737">
    <property type="term" value="C:cytoplasm"/>
    <property type="evidence" value="ECO:0007669"/>
    <property type="project" value="UniProtKB-SubCell"/>
</dbReference>
<dbReference type="GO" id="GO:0005634">
    <property type="term" value="C:nucleus"/>
    <property type="evidence" value="ECO:0000318"/>
    <property type="project" value="GO_Central"/>
</dbReference>
<dbReference type="GO" id="GO:0003682">
    <property type="term" value="F:chromatin binding"/>
    <property type="evidence" value="ECO:0000318"/>
    <property type="project" value="GO_Central"/>
</dbReference>
<dbReference type="GO" id="GO:0042393">
    <property type="term" value="F:histone binding"/>
    <property type="evidence" value="ECO:0000318"/>
    <property type="project" value="GO_Central"/>
</dbReference>
<dbReference type="GO" id="GO:0000724">
    <property type="term" value="P:double-strand break repair via homologous recombination"/>
    <property type="evidence" value="ECO:0007669"/>
    <property type="project" value="UniProtKB-ARBA"/>
</dbReference>
<dbReference type="GO" id="GO:0006334">
    <property type="term" value="P:nucleosome assembly"/>
    <property type="evidence" value="ECO:0000318"/>
    <property type="project" value="GO_Central"/>
</dbReference>
<dbReference type="FunFam" id="1.20.5.1500:FF:000001">
    <property type="entry name" value="Nucleosome assembly protein 1-like 1"/>
    <property type="match status" value="1"/>
</dbReference>
<dbReference type="FunFam" id="3.30.1120.90:FF:000005">
    <property type="entry name" value="Nucleosome assembly protein11"/>
    <property type="match status" value="1"/>
</dbReference>
<dbReference type="Gene3D" id="1.20.5.1500">
    <property type="match status" value="1"/>
</dbReference>
<dbReference type="Gene3D" id="3.30.1120.90">
    <property type="entry name" value="Nucleosome assembly protein"/>
    <property type="match status" value="1"/>
</dbReference>
<dbReference type="InterPro" id="IPR037231">
    <property type="entry name" value="NAP-like_sf"/>
</dbReference>
<dbReference type="InterPro" id="IPR002164">
    <property type="entry name" value="NAP_family"/>
</dbReference>
<dbReference type="PANTHER" id="PTHR11875">
    <property type="entry name" value="TESTIS-SPECIFIC Y-ENCODED PROTEIN"/>
    <property type="match status" value="1"/>
</dbReference>
<dbReference type="Pfam" id="PF00956">
    <property type="entry name" value="NAP"/>
    <property type="match status" value="1"/>
</dbReference>
<dbReference type="SUPFAM" id="SSF143113">
    <property type="entry name" value="NAP-like"/>
    <property type="match status" value="1"/>
</dbReference>
<accession>Q70Z18</accession>
<feature type="chain" id="PRO_0000423697" description="Nucleosome assembly protein 1;2">
    <location>
        <begin position="1"/>
        <end position="374"/>
    </location>
</feature>
<feature type="propeptide" id="PRO_0000423698" description="Removed in mature form" evidence="2">
    <location>
        <begin position="375"/>
        <end position="377"/>
    </location>
</feature>
<feature type="region of interest" description="Disordered" evidence="4">
    <location>
        <begin position="298"/>
        <end position="377"/>
    </location>
</feature>
<feature type="coiled-coil region" evidence="3">
    <location>
        <begin position="26"/>
        <end position="80"/>
    </location>
</feature>
<feature type="short sequence motif" description="Nuclear export signal" evidence="3">
    <location>
        <begin position="47"/>
        <end position="62"/>
    </location>
</feature>
<feature type="short sequence motif" description="Nuclear localization signal" evidence="3">
    <location>
        <begin position="223"/>
        <end position="228"/>
    </location>
</feature>
<feature type="compositionally biased region" description="Acidic residues" evidence="4">
    <location>
        <begin position="299"/>
        <end position="342"/>
    </location>
</feature>
<feature type="modified residue" description="Cysteine methyl ester" evidence="2">
    <location>
        <position position="374"/>
    </location>
</feature>
<feature type="lipid moiety-binding region" description="S-farnesyl cysteine" evidence="2">
    <location>
        <position position="374"/>
    </location>
</feature>
<proteinExistence type="evidence at protein level"/>
<evidence type="ECO:0000250" key="1"/>
<evidence type="ECO:0000250" key="2">
    <source>
        <dbReference type="UniProtKB" id="Q9SZI2"/>
    </source>
</evidence>
<evidence type="ECO:0000255" key="3"/>
<evidence type="ECO:0000256" key="4">
    <source>
        <dbReference type="SAM" id="MobiDB-lite"/>
    </source>
</evidence>
<evidence type="ECO:0000269" key="5">
    <source>
    </source>
</evidence>
<evidence type="ECO:0000269" key="6">
    <source>
    </source>
</evidence>
<evidence type="ECO:0000305" key="7"/>
<reference key="1">
    <citation type="journal article" date="2003" name="Planta">
        <title>Regulation of biosynthesis and intracellular localization of rice and tobacco homologues of nucleosome assembly protein 1.</title>
        <authorList>
            <person name="Dong A."/>
            <person name="Zhu Y."/>
            <person name="Yu Y."/>
            <person name="Cao K."/>
            <person name="Sun C."/>
            <person name="Shen W.H."/>
        </authorList>
    </citation>
    <scope>NUCLEOTIDE SEQUENCE [MRNA]</scope>
    <scope>FUNCTION</scope>
    <source>
        <strain>cv. Bright Yellow 2</strain>
    </source>
</reference>
<reference key="2">
    <citation type="journal article" date="2005" name="Plant Physiol.">
        <title>Interacting proteins and differences in nuclear transport reveal specific functions for the NAP1 family proteins in plants.</title>
        <authorList>
            <person name="Dong A."/>
            <person name="Liu Z."/>
            <person name="Zhu Y."/>
            <person name="Yu F."/>
            <person name="Li Z."/>
            <person name="Cao K."/>
            <person name="Shen W.H."/>
        </authorList>
    </citation>
    <scope>INTERACTION WITH CYCB1;1</scope>
    <scope>SUBCELLULAR LOCATION</scope>
    <scope>FUNCTION</scope>
</reference>